<gene>
    <name type="primary">rrf2</name>
    <name type="ordered locus">DVU_0529</name>
</gene>
<protein>
    <recommendedName>
        <fullName>Protein rrf2</fullName>
    </recommendedName>
</protein>
<proteinExistence type="predicted"/>
<organism>
    <name type="scientific">Nitratidesulfovibrio vulgaris (strain ATCC 29579 / DSM 644 / CCUG 34227 / NCIMB 8303 / VKM B-1760 / Hildenborough)</name>
    <name type="common">Desulfovibrio vulgaris</name>
    <dbReference type="NCBI Taxonomy" id="882"/>
    <lineage>
        <taxon>Bacteria</taxon>
        <taxon>Pseudomonadati</taxon>
        <taxon>Thermodesulfobacteriota</taxon>
        <taxon>Desulfovibrionia</taxon>
        <taxon>Desulfovibrionales</taxon>
        <taxon>Desulfovibrionaceae</taxon>
        <taxon>Nitratidesulfovibrio</taxon>
    </lineage>
</organism>
<sequence>MKLTTRSRYGTRMLLDIAMHGSEQPVSIKDIAQRQGISVKYLEKLIRVLRKAGYITSTLGAHGGYQLAHKAEDIPVGDVVYALEEMEAPVECDEENPCCPRMAVCLTRTIWGEAAKAMYRKLNTFTLADLMRDASLCPKNACNISPHATH</sequence>
<keyword id="KW-0238">DNA-binding</keyword>
<keyword id="KW-1185">Reference proteome</keyword>
<evidence type="ECO:0000255" key="1">
    <source>
        <dbReference type="PROSITE-ProRule" id="PRU00540"/>
    </source>
</evidence>
<dbReference type="EMBL" id="L16784">
    <property type="protein sequence ID" value="AAA72001.1"/>
    <property type="molecule type" value="Unassigned_DNA"/>
</dbReference>
<dbReference type="EMBL" id="AE017285">
    <property type="protein sequence ID" value="AAS95011.1"/>
    <property type="molecule type" value="Genomic_DNA"/>
</dbReference>
<dbReference type="PIR" id="H40605">
    <property type="entry name" value="H40605"/>
</dbReference>
<dbReference type="RefSeq" id="WP_010937835.1">
    <property type="nucleotide sequence ID" value="NC_002937.3"/>
</dbReference>
<dbReference type="RefSeq" id="YP_009752.1">
    <property type="nucleotide sequence ID" value="NC_002937.3"/>
</dbReference>
<dbReference type="SMR" id="P33395"/>
<dbReference type="STRING" id="882.DVU_0529"/>
<dbReference type="PaxDb" id="882-DVU_0529"/>
<dbReference type="DNASU" id="2796178"/>
<dbReference type="EnsemblBacteria" id="AAS95011">
    <property type="protein sequence ID" value="AAS95011"/>
    <property type="gene ID" value="DVU_0529"/>
</dbReference>
<dbReference type="KEGG" id="dvu:DVU_0529"/>
<dbReference type="PATRIC" id="fig|882.5.peg.505"/>
<dbReference type="eggNOG" id="COG1959">
    <property type="taxonomic scope" value="Bacteria"/>
</dbReference>
<dbReference type="HOGENOM" id="CLU_107144_0_1_7"/>
<dbReference type="OrthoDB" id="9800519at2"/>
<dbReference type="PhylomeDB" id="P33395"/>
<dbReference type="Proteomes" id="UP000002194">
    <property type="component" value="Chromosome"/>
</dbReference>
<dbReference type="GO" id="GO:0005829">
    <property type="term" value="C:cytosol"/>
    <property type="evidence" value="ECO:0007669"/>
    <property type="project" value="TreeGrafter"/>
</dbReference>
<dbReference type="GO" id="GO:0003677">
    <property type="term" value="F:DNA binding"/>
    <property type="evidence" value="ECO:0007669"/>
    <property type="project" value="UniProtKB-KW"/>
</dbReference>
<dbReference type="GO" id="GO:0003700">
    <property type="term" value="F:DNA-binding transcription factor activity"/>
    <property type="evidence" value="ECO:0007669"/>
    <property type="project" value="TreeGrafter"/>
</dbReference>
<dbReference type="Gene3D" id="1.10.10.10">
    <property type="entry name" value="Winged helix-like DNA-binding domain superfamily/Winged helix DNA-binding domain"/>
    <property type="match status" value="1"/>
</dbReference>
<dbReference type="InterPro" id="IPR030489">
    <property type="entry name" value="TR_Rrf2-type_CS"/>
</dbReference>
<dbReference type="InterPro" id="IPR000944">
    <property type="entry name" value="Tscrpt_reg_Rrf2"/>
</dbReference>
<dbReference type="InterPro" id="IPR036388">
    <property type="entry name" value="WH-like_DNA-bd_sf"/>
</dbReference>
<dbReference type="InterPro" id="IPR036390">
    <property type="entry name" value="WH_DNA-bd_sf"/>
</dbReference>
<dbReference type="NCBIfam" id="TIGR00738">
    <property type="entry name" value="rrf2_super"/>
    <property type="match status" value="1"/>
</dbReference>
<dbReference type="PANTHER" id="PTHR33221:SF5">
    <property type="entry name" value="HTH-TYPE TRANSCRIPTIONAL REGULATOR ISCR"/>
    <property type="match status" value="1"/>
</dbReference>
<dbReference type="PANTHER" id="PTHR33221">
    <property type="entry name" value="WINGED HELIX-TURN-HELIX TRANSCRIPTIONAL REGULATOR, RRF2 FAMILY"/>
    <property type="match status" value="1"/>
</dbReference>
<dbReference type="Pfam" id="PF02082">
    <property type="entry name" value="Rrf2"/>
    <property type="match status" value="1"/>
</dbReference>
<dbReference type="SUPFAM" id="SSF46785">
    <property type="entry name" value="Winged helix' DNA-binding domain"/>
    <property type="match status" value="1"/>
</dbReference>
<dbReference type="PROSITE" id="PS01332">
    <property type="entry name" value="HTH_RRF2_1"/>
    <property type="match status" value="1"/>
</dbReference>
<dbReference type="PROSITE" id="PS51197">
    <property type="entry name" value="HTH_RRF2_2"/>
    <property type="match status" value="1"/>
</dbReference>
<feature type="chain" id="PRO_0000109554" description="Protein rrf2">
    <location>
        <begin position="1"/>
        <end position="150"/>
    </location>
</feature>
<feature type="domain" description="HTH rrf2-type" evidence="1">
    <location>
        <begin position="2"/>
        <end position="132"/>
    </location>
</feature>
<reference key="1">
    <citation type="journal article" date="1993" name="J. Bacteriol.">
        <title>The hmc operon of Desulfovibrio vulgaris subsp. vulgaris Hildenborough encodes a potential transmembrane redox protein complex.</title>
        <authorList>
            <person name="Rossi M."/>
            <person name="Pollock W.B.R."/>
            <person name="Reij M.W."/>
            <person name="Keon R.G."/>
            <person name="Fu R."/>
            <person name="Voordouw G."/>
        </authorList>
    </citation>
    <scope>NUCLEOTIDE SEQUENCE [GENOMIC DNA]</scope>
</reference>
<reference key="2">
    <citation type="journal article" date="2004" name="Nat. Biotechnol.">
        <title>The genome sequence of the anaerobic, sulfate-reducing bacterium Desulfovibrio vulgaris Hildenborough.</title>
        <authorList>
            <person name="Heidelberg J.F."/>
            <person name="Seshadri R."/>
            <person name="Haveman S.A."/>
            <person name="Hemme C.L."/>
            <person name="Paulsen I.T."/>
            <person name="Kolonay J.F."/>
            <person name="Eisen J.A."/>
            <person name="Ward N.L."/>
            <person name="Methe B.A."/>
            <person name="Brinkac L.M."/>
            <person name="Daugherty S.C."/>
            <person name="DeBoy R.T."/>
            <person name="Dodson R.J."/>
            <person name="Durkin A.S."/>
            <person name="Madupu R."/>
            <person name="Nelson W.C."/>
            <person name="Sullivan S.A."/>
            <person name="Fouts D.E."/>
            <person name="Haft D.H."/>
            <person name="Selengut J."/>
            <person name="Peterson J.D."/>
            <person name="Davidsen T.M."/>
            <person name="Zafar N."/>
            <person name="Zhou L."/>
            <person name="Radune D."/>
            <person name="Dimitrov G."/>
            <person name="Hance M."/>
            <person name="Tran K."/>
            <person name="Khouri H.M."/>
            <person name="Gill J."/>
            <person name="Utterback T.R."/>
            <person name="Feldblyum T.V."/>
            <person name="Wall J.D."/>
            <person name="Voordouw G."/>
            <person name="Fraser C.M."/>
        </authorList>
    </citation>
    <scope>NUCLEOTIDE SEQUENCE [LARGE SCALE GENOMIC DNA]</scope>
    <source>
        <strain>ATCC 29579 / DSM 644 / CCUG 34227 / NCIMB 8303 / VKM B-1760 / Hildenborough</strain>
    </source>
</reference>
<name>RRF2_NITV2</name>
<accession>P33395</accession>